<name>SGBU_HAEIN</name>
<sequence length="286" mass="33062">MKKHKIGIYEKALPKNITWQERLSLAKACGFEFIEMSIDESNDRLSRLNWTKSERIALHQSIIQSGITIPSMCLSAHRRFPFGSKDKKIRQKSFEIMEKAIDLSVNLGIRTIQLAGYDVYYEKQDEETIKYFQEGIEFAVTLAASAQVTLAVEIMDTPFMSSISRWKKWDTIINSPWFTVYPDIGNLSAWNNNIEEELTLGIDKISAIHLKDTYPVTETSKGQFRDVPFGQGCVDFVHFFSLLKKLNYRGAFLIEMWTEKNEEPLLEIIQARKWIVQQMEKAGLLC</sequence>
<feature type="chain" id="PRO_0000097719" description="Putative L-ribulose-5-phosphate 3-epimerase SgbU">
    <location>
        <begin position="1"/>
        <end position="286"/>
    </location>
</feature>
<protein>
    <recommendedName>
        <fullName>Putative L-ribulose-5-phosphate 3-epimerase SgbU</fullName>
        <ecNumber>5.1.3.22</ecNumber>
    </recommendedName>
    <alternativeName>
        <fullName>L-xylulose-5-phosphate 3-epimerase</fullName>
    </alternativeName>
</protein>
<proteinExistence type="inferred from homology"/>
<keyword id="KW-0413">Isomerase</keyword>
<keyword id="KW-1185">Reference proteome</keyword>
<dbReference type="EC" id="5.1.3.22"/>
<dbReference type="EMBL" id="L42023">
    <property type="protein sequence ID" value="AAC22686.1"/>
    <property type="molecule type" value="Genomic_DNA"/>
</dbReference>
<dbReference type="PIR" id="G64164">
    <property type="entry name" value="G64164"/>
</dbReference>
<dbReference type="RefSeq" id="NP_439186.1">
    <property type="nucleotide sequence ID" value="NC_000907.1"/>
</dbReference>
<dbReference type="SMR" id="P44990"/>
<dbReference type="STRING" id="71421.HI_1026"/>
<dbReference type="DNASU" id="950012"/>
<dbReference type="EnsemblBacteria" id="AAC22686">
    <property type="protein sequence ID" value="AAC22686"/>
    <property type="gene ID" value="HI_1026"/>
</dbReference>
<dbReference type="KEGG" id="hin:HI_1026"/>
<dbReference type="PATRIC" id="fig|71421.8.peg.1070"/>
<dbReference type="eggNOG" id="COG3623">
    <property type="taxonomic scope" value="Bacteria"/>
</dbReference>
<dbReference type="HOGENOM" id="CLU_082738_0_0_6"/>
<dbReference type="OrthoDB" id="3185623at2"/>
<dbReference type="PhylomeDB" id="P44990"/>
<dbReference type="BioCyc" id="HINF71421:G1GJ1-1066-MONOMER"/>
<dbReference type="Proteomes" id="UP000000579">
    <property type="component" value="Chromosome"/>
</dbReference>
<dbReference type="GO" id="GO:0003677">
    <property type="term" value="F:DNA binding"/>
    <property type="evidence" value="ECO:0007669"/>
    <property type="project" value="InterPro"/>
</dbReference>
<dbReference type="GO" id="GO:0016861">
    <property type="term" value="F:intramolecular oxidoreductase activity, interconverting aldoses and ketoses"/>
    <property type="evidence" value="ECO:0007669"/>
    <property type="project" value="InterPro"/>
</dbReference>
<dbReference type="GO" id="GO:0034015">
    <property type="term" value="F:L-ribulose-5-phosphate 3-epimerase activity"/>
    <property type="evidence" value="ECO:0000318"/>
    <property type="project" value="GO_Central"/>
</dbReference>
<dbReference type="GO" id="GO:0008270">
    <property type="term" value="F:zinc ion binding"/>
    <property type="evidence" value="ECO:0007669"/>
    <property type="project" value="InterPro"/>
</dbReference>
<dbReference type="GO" id="GO:0006281">
    <property type="term" value="P:DNA repair"/>
    <property type="evidence" value="ECO:0007669"/>
    <property type="project" value="InterPro"/>
</dbReference>
<dbReference type="GO" id="GO:0019852">
    <property type="term" value="P:L-ascorbic acid metabolic process"/>
    <property type="evidence" value="ECO:0000318"/>
    <property type="project" value="GO_Central"/>
</dbReference>
<dbReference type="CDD" id="cd00019">
    <property type="entry name" value="AP2Ec"/>
    <property type="match status" value="1"/>
</dbReference>
<dbReference type="FunFam" id="3.20.20.150:FF:000003">
    <property type="entry name" value="L-ribulose-5-phosphate 3-epimerase UlaE"/>
    <property type="match status" value="1"/>
</dbReference>
<dbReference type="Gene3D" id="3.20.20.150">
    <property type="entry name" value="Divalent-metal-dependent TIM barrel enzymes"/>
    <property type="match status" value="1"/>
</dbReference>
<dbReference type="InterPro" id="IPR001719">
    <property type="entry name" value="AP_endonuc_2"/>
</dbReference>
<dbReference type="InterPro" id="IPR004560">
    <property type="entry name" value="L-Ru-5P_3-Epase"/>
</dbReference>
<dbReference type="InterPro" id="IPR050417">
    <property type="entry name" value="Sugar_Epim/Isomerase"/>
</dbReference>
<dbReference type="InterPro" id="IPR036237">
    <property type="entry name" value="Xyl_isomerase-like_sf"/>
</dbReference>
<dbReference type="InterPro" id="IPR013022">
    <property type="entry name" value="Xyl_isomerase-like_TIM-brl"/>
</dbReference>
<dbReference type="NCBIfam" id="TIGR00542">
    <property type="entry name" value="hxl6Piso_put"/>
    <property type="match status" value="1"/>
</dbReference>
<dbReference type="NCBIfam" id="NF009688">
    <property type="entry name" value="PRK13209.1"/>
    <property type="match status" value="1"/>
</dbReference>
<dbReference type="NCBIfam" id="NF009689">
    <property type="entry name" value="PRK13210.1"/>
    <property type="match status" value="1"/>
</dbReference>
<dbReference type="PANTHER" id="PTHR43489">
    <property type="entry name" value="ISOMERASE"/>
    <property type="match status" value="1"/>
</dbReference>
<dbReference type="PANTHER" id="PTHR43489:SF1">
    <property type="entry name" value="L-RIBULOSE-5-PHOSPHATE 3-EPIMERASE SGBU-RELATED"/>
    <property type="match status" value="1"/>
</dbReference>
<dbReference type="Pfam" id="PF01261">
    <property type="entry name" value="AP_endonuc_2"/>
    <property type="match status" value="1"/>
</dbReference>
<dbReference type="SUPFAM" id="SSF51658">
    <property type="entry name" value="Xylose isomerase-like"/>
    <property type="match status" value="1"/>
</dbReference>
<reference key="1">
    <citation type="journal article" date="1995" name="Science">
        <title>Whole-genome random sequencing and assembly of Haemophilus influenzae Rd.</title>
        <authorList>
            <person name="Fleischmann R.D."/>
            <person name="Adams M.D."/>
            <person name="White O."/>
            <person name="Clayton R.A."/>
            <person name="Kirkness E.F."/>
            <person name="Kerlavage A.R."/>
            <person name="Bult C.J."/>
            <person name="Tomb J.-F."/>
            <person name="Dougherty B.A."/>
            <person name="Merrick J.M."/>
            <person name="McKenney K."/>
            <person name="Sutton G.G."/>
            <person name="FitzHugh W."/>
            <person name="Fields C.A."/>
            <person name="Gocayne J.D."/>
            <person name="Scott J.D."/>
            <person name="Shirley R."/>
            <person name="Liu L.-I."/>
            <person name="Glodek A."/>
            <person name="Kelley J.M."/>
            <person name="Weidman J.F."/>
            <person name="Phillips C.A."/>
            <person name="Spriggs T."/>
            <person name="Hedblom E."/>
            <person name="Cotton M.D."/>
            <person name="Utterback T.R."/>
            <person name="Hanna M.C."/>
            <person name="Nguyen D.T."/>
            <person name="Saudek D.M."/>
            <person name="Brandon R.C."/>
            <person name="Fine L.D."/>
            <person name="Fritchman J.L."/>
            <person name="Fuhrmann J.L."/>
            <person name="Geoghagen N.S.M."/>
            <person name="Gnehm C.L."/>
            <person name="McDonald L.A."/>
            <person name="Small K.V."/>
            <person name="Fraser C.M."/>
            <person name="Smith H.O."/>
            <person name="Venter J.C."/>
        </authorList>
    </citation>
    <scope>NUCLEOTIDE SEQUENCE [LARGE SCALE GENOMIC DNA]</scope>
    <source>
        <strain>ATCC 51907 / DSM 11121 / KW20 / Rd</strain>
    </source>
</reference>
<comment type="function">
    <text evidence="1">Catalyzes the isomerization of L-xylulose-5-phosphate to L-ribulose-5-phosphate.</text>
</comment>
<comment type="catalytic activity">
    <reaction>
        <text>L-ribulose 5-phosphate = L-xylulose 5-phosphate</text>
        <dbReference type="Rhea" id="RHEA:18497"/>
        <dbReference type="ChEBI" id="CHEBI:57829"/>
        <dbReference type="ChEBI" id="CHEBI:58226"/>
        <dbReference type="EC" id="5.1.3.22"/>
    </reaction>
</comment>
<comment type="miscellaneous">
    <text>Probably part of a sugar metabolic pathway along with SgbH.</text>
</comment>
<comment type="similarity">
    <text evidence="1">Belongs to the L-ribulose-5-phosphate 3-epimerase family.</text>
</comment>
<gene>
    <name type="primary">sgbU</name>
    <name type="ordered locus">HI_1026</name>
</gene>
<evidence type="ECO:0000305" key="1"/>
<accession>P44990</accession>
<organism>
    <name type="scientific">Haemophilus influenzae (strain ATCC 51907 / DSM 11121 / KW20 / Rd)</name>
    <dbReference type="NCBI Taxonomy" id="71421"/>
    <lineage>
        <taxon>Bacteria</taxon>
        <taxon>Pseudomonadati</taxon>
        <taxon>Pseudomonadota</taxon>
        <taxon>Gammaproteobacteria</taxon>
        <taxon>Pasteurellales</taxon>
        <taxon>Pasteurellaceae</taxon>
        <taxon>Haemophilus</taxon>
    </lineage>
</organism>